<proteinExistence type="inferred from homology"/>
<protein>
    <recommendedName>
        <fullName evidence="1">Ribosome-recycling factor</fullName>
        <shortName evidence="1">RRF</shortName>
    </recommendedName>
    <alternativeName>
        <fullName evidence="1">Ribosome-releasing factor</fullName>
    </alternativeName>
</protein>
<evidence type="ECO:0000255" key="1">
    <source>
        <dbReference type="HAMAP-Rule" id="MF_00040"/>
    </source>
</evidence>
<organism>
    <name type="scientific">Escherichia coli O157:H7 (strain EC4115 / EHEC)</name>
    <dbReference type="NCBI Taxonomy" id="444450"/>
    <lineage>
        <taxon>Bacteria</taxon>
        <taxon>Pseudomonadati</taxon>
        <taxon>Pseudomonadota</taxon>
        <taxon>Gammaproteobacteria</taxon>
        <taxon>Enterobacterales</taxon>
        <taxon>Enterobacteriaceae</taxon>
        <taxon>Escherichia</taxon>
    </lineage>
</organism>
<accession>B5Z0F1</accession>
<keyword id="KW-0007">Acetylation</keyword>
<keyword id="KW-0963">Cytoplasm</keyword>
<keyword id="KW-0648">Protein biosynthesis</keyword>
<reference key="1">
    <citation type="journal article" date="2011" name="Proc. Natl. Acad. Sci. U.S.A.">
        <title>Genomic anatomy of Escherichia coli O157:H7 outbreaks.</title>
        <authorList>
            <person name="Eppinger M."/>
            <person name="Mammel M.K."/>
            <person name="Leclerc J.E."/>
            <person name="Ravel J."/>
            <person name="Cebula T.A."/>
        </authorList>
    </citation>
    <scope>NUCLEOTIDE SEQUENCE [LARGE SCALE GENOMIC DNA]</scope>
    <source>
        <strain>EC4115 / EHEC</strain>
    </source>
</reference>
<comment type="function">
    <text evidence="1">Responsible for the release of ribosomes from messenger RNA at the termination of protein biosynthesis. May increase the efficiency of translation by recycling ribosomes from one round of translation to another.</text>
</comment>
<comment type="subcellular location">
    <subcellularLocation>
        <location evidence="1">Cytoplasm</location>
    </subcellularLocation>
</comment>
<comment type="similarity">
    <text evidence="1">Belongs to the RRF family.</text>
</comment>
<dbReference type="EMBL" id="CP001164">
    <property type="protein sequence ID" value="ACI36869.1"/>
    <property type="molecule type" value="Genomic_DNA"/>
</dbReference>
<dbReference type="RefSeq" id="WP_000622418.1">
    <property type="nucleotide sequence ID" value="NC_011353.1"/>
</dbReference>
<dbReference type="SMR" id="B5Z0F1"/>
<dbReference type="GeneID" id="93777253"/>
<dbReference type="KEGG" id="ecf:ECH74115_0182"/>
<dbReference type="HOGENOM" id="CLU_073981_2_1_6"/>
<dbReference type="GO" id="GO:0005829">
    <property type="term" value="C:cytosol"/>
    <property type="evidence" value="ECO:0007669"/>
    <property type="project" value="GOC"/>
</dbReference>
<dbReference type="GO" id="GO:0043023">
    <property type="term" value="F:ribosomal large subunit binding"/>
    <property type="evidence" value="ECO:0007669"/>
    <property type="project" value="TreeGrafter"/>
</dbReference>
<dbReference type="GO" id="GO:0002184">
    <property type="term" value="P:cytoplasmic translational termination"/>
    <property type="evidence" value="ECO:0007669"/>
    <property type="project" value="TreeGrafter"/>
</dbReference>
<dbReference type="CDD" id="cd00520">
    <property type="entry name" value="RRF"/>
    <property type="match status" value="1"/>
</dbReference>
<dbReference type="FunFam" id="1.10.132.20:FF:000001">
    <property type="entry name" value="Ribosome-recycling factor"/>
    <property type="match status" value="1"/>
</dbReference>
<dbReference type="FunFam" id="3.30.1360.40:FF:000001">
    <property type="entry name" value="Ribosome-recycling factor"/>
    <property type="match status" value="1"/>
</dbReference>
<dbReference type="Gene3D" id="3.30.1360.40">
    <property type="match status" value="1"/>
</dbReference>
<dbReference type="Gene3D" id="1.10.132.20">
    <property type="entry name" value="Ribosome-recycling factor"/>
    <property type="match status" value="1"/>
</dbReference>
<dbReference type="HAMAP" id="MF_00040">
    <property type="entry name" value="RRF"/>
    <property type="match status" value="1"/>
</dbReference>
<dbReference type="InterPro" id="IPR002661">
    <property type="entry name" value="Ribosome_recyc_fac"/>
</dbReference>
<dbReference type="InterPro" id="IPR023584">
    <property type="entry name" value="Ribosome_recyc_fac_dom"/>
</dbReference>
<dbReference type="InterPro" id="IPR036191">
    <property type="entry name" value="RRF_sf"/>
</dbReference>
<dbReference type="NCBIfam" id="TIGR00496">
    <property type="entry name" value="frr"/>
    <property type="match status" value="1"/>
</dbReference>
<dbReference type="PANTHER" id="PTHR20982:SF3">
    <property type="entry name" value="MITOCHONDRIAL RIBOSOME RECYCLING FACTOR PSEUDO 1"/>
    <property type="match status" value="1"/>
</dbReference>
<dbReference type="PANTHER" id="PTHR20982">
    <property type="entry name" value="RIBOSOME RECYCLING FACTOR"/>
    <property type="match status" value="1"/>
</dbReference>
<dbReference type="Pfam" id="PF01765">
    <property type="entry name" value="RRF"/>
    <property type="match status" value="1"/>
</dbReference>
<dbReference type="SUPFAM" id="SSF55194">
    <property type="entry name" value="Ribosome recycling factor, RRF"/>
    <property type="match status" value="1"/>
</dbReference>
<name>RRF_ECO5E</name>
<sequence>MISDIRKDAEVRMDKCVEAFKTQISKIRTGRASPSLLDGIVVEYYGTPTPLRQLASVTVEDSRTLKINVFDRSMSPAVEKAIMASDLGLNPNSAGSDIRVPLPPLTEERRKDLTKIVRGEAEQARVAVRNVRRDANDKVKALLKDKEISEDDDRRSQDDVQKLTDAAIKKIEAALADKEAELMQF</sequence>
<feature type="chain" id="PRO_1000090737" description="Ribosome-recycling factor">
    <location>
        <begin position="1"/>
        <end position="185"/>
    </location>
</feature>
<feature type="modified residue" description="N6-acetyllysine" evidence="1">
    <location>
        <position position="162"/>
    </location>
</feature>
<gene>
    <name evidence="1" type="primary">frr</name>
    <name type="ordered locus">ECH74115_0182</name>
</gene>